<evidence type="ECO:0000250" key="1"/>
<evidence type="ECO:0000255" key="2"/>
<evidence type="ECO:0000269" key="3">
    <source>
    </source>
</evidence>
<evidence type="ECO:0000269" key="4">
    <source>
    </source>
</evidence>
<evidence type="ECO:0000303" key="5">
    <source>
    </source>
</evidence>
<evidence type="ECO:0000303" key="6">
    <source>
    </source>
</evidence>
<evidence type="ECO:0000303" key="7">
    <source>
    </source>
</evidence>
<evidence type="ECO:0000305" key="8"/>
<evidence type="ECO:0007829" key="9">
    <source>
        <dbReference type="PDB" id="5T40"/>
    </source>
</evidence>
<evidence type="ECO:0007829" key="10">
    <source>
        <dbReference type="PDB" id="5ZKJ"/>
    </source>
</evidence>
<evidence type="ECO:0007829" key="11">
    <source>
        <dbReference type="PDB" id="6IID"/>
    </source>
</evidence>
<evidence type="ECO:0007829" key="12">
    <source>
        <dbReference type="PDB" id="7R6T"/>
    </source>
</evidence>
<evidence type="ECO:0007829" key="13">
    <source>
        <dbReference type="PDB" id="9FXN"/>
    </source>
</evidence>
<gene>
    <name type="primary">EXOG</name>
    <name type="synonym">ENDOGL1</name>
    <name type="synonym">ENDOGL2</name>
    <name type="synonym">ENGL</name>
</gene>
<comment type="function">
    <text evidence="4">Endo/exonuclease with nicking activity towards supercoiled DNA, a preference for single-stranded DNA and 5'-3' exonuclease activity.</text>
</comment>
<comment type="cofactor">
    <cofactor evidence="4">
        <name>a divalent metal cation</name>
        <dbReference type="ChEBI" id="CHEBI:60240"/>
    </cofactor>
</comment>
<comment type="subunit">
    <text evidence="4">Homodimer.</text>
</comment>
<comment type="interaction">
    <interactant intactId="EBI-20863487">
        <id>Q9Y2C4</id>
    </interactant>
    <interactant intactId="EBI-1811449">
        <id>Q7Z7L7</id>
        <label>ZER1</label>
    </interactant>
    <organismsDiffer>false</organismsDiffer>
    <experiments>2</experiments>
</comment>
<comment type="subcellular location">
    <subcellularLocation>
        <location evidence="4">Mitochondrion inner membrane</location>
    </subcellularLocation>
</comment>
<comment type="alternative products">
    <event type="alternative splicing"/>
    <isoform>
        <id>Q9Y2C4-1</id>
        <name>1</name>
        <name>ENGL-a</name>
        <sequence type="displayed"/>
    </isoform>
    <isoform>
        <id>Q9Y2C4-2</id>
        <name>2</name>
        <name>ENDOGL2</name>
        <name>ENGL-b</name>
        <sequence type="described" ref="VSP_034506 VSP_034507 VSP_034508"/>
    </isoform>
    <isoform>
        <id>Q9Y2C4-3</id>
        <name>3</name>
        <sequence type="described" ref="VSP_034506"/>
    </isoform>
    <isoform>
        <id>Q9Y2C4-4</id>
        <name>4</name>
        <sequence type="described" ref="VSP_041214"/>
    </isoform>
</comment>
<comment type="tissue specificity">
    <text>Ubiquitous.</text>
</comment>
<comment type="miscellaneous">
    <text evidence="1">The active site contains 1 hydrated divalent metal cation that has only 1 direct interaction with the protein; all other interactions are via water molecules.</text>
</comment>
<comment type="miscellaneous">
    <molecule>Isoform 2</molecule>
    <text evidence="8">Probably inactive since it lacks the active site.</text>
</comment>
<comment type="miscellaneous">
    <molecule>Isoform 3</molecule>
    <text evidence="8">Probably inactive since it lacks the active site.</text>
</comment>
<comment type="similarity">
    <text evidence="8">Belongs to the DNA/RNA non-specific endonuclease family.</text>
</comment>
<name>EXOG_HUMAN</name>
<feature type="transit peptide" description="Mitochondrion" evidence="2">
    <location>
        <begin position="1"/>
        <end position="41"/>
    </location>
</feature>
<feature type="chain" id="PRO_0000178669" description="Nuclease EXOG, mitochondrial">
    <location>
        <begin position="42"/>
        <end position="368"/>
    </location>
</feature>
<feature type="active site" description="Proton acceptor">
    <location>
        <position position="140"/>
    </location>
</feature>
<feature type="binding site" evidence="1">
    <location>
        <position position="171"/>
    </location>
    <ligand>
        <name>a divalent metal cation</name>
        <dbReference type="ChEBI" id="CHEBI:60240"/>
        <note>catalytic</note>
    </ligand>
</feature>
<feature type="splice variant" id="VSP_034506" description="In isoform 2 and isoform 3." evidence="5 6 7">
    <location>
        <begin position="1"/>
        <end position="140"/>
    </location>
</feature>
<feature type="splice variant" id="VSP_041214" description="In isoform 4." evidence="8">
    <location>
        <begin position="55"/>
        <end position="104"/>
    </location>
</feature>
<feature type="splice variant" id="VSP_034507" description="In isoform 2." evidence="5">
    <original>VILARRSSVSTEPLALGAFVVPNEAIGFQPQLTEFQVSLQDLEKLSGLVFFPHLDRTSD</original>
    <variation>DHAGCCVESPLGTRTSEEATARIQERDDGGSDQRSGLVELGIYFEGRANRISGRIGCRV</variation>
    <location>
        <begin position="231"/>
        <end position="289"/>
    </location>
</feature>
<feature type="splice variant" id="VSP_034508" description="In isoform 2." evidence="5">
    <location>
        <begin position="290"/>
        <end position="368"/>
    </location>
</feature>
<feature type="sequence variant" id="VAR_044320" description="Abolishes catalytic activity; dbSNP:rs1141223." evidence="3 4">
    <original>G</original>
    <variation>V</variation>
    <location>
        <position position="277"/>
    </location>
</feature>
<feature type="mutagenesis site" description="No effect on catalytic activity." evidence="4">
    <original>S</original>
    <variation>D</variation>
    <location>
        <position position="137"/>
    </location>
</feature>
<feature type="mutagenesis site" description="Abolishes catalytic activity." evidence="4">
    <original>H</original>
    <variation>A</variation>
    <location>
        <position position="140"/>
    </location>
</feature>
<feature type="sequence conflict" description="In Ref. 2; BAF82796." evidence="8" ref="2">
    <original>L</original>
    <variation>S</variation>
    <location>
        <position position="309"/>
    </location>
</feature>
<feature type="helix" evidence="13">
    <location>
        <begin position="62"/>
        <end position="65"/>
    </location>
</feature>
<feature type="strand" evidence="10">
    <location>
        <begin position="73"/>
        <end position="76"/>
    </location>
</feature>
<feature type="strand" evidence="13">
    <location>
        <begin position="78"/>
        <end position="85"/>
    </location>
</feature>
<feature type="turn" evidence="13">
    <location>
        <begin position="86"/>
        <end position="89"/>
    </location>
</feature>
<feature type="strand" evidence="13">
    <location>
        <begin position="90"/>
        <end position="98"/>
    </location>
</feature>
<feature type="turn" evidence="13">
    <location>
        <begin position="100"/>
        <end position="103"/>
    </location>
</feature>
<feature type="helix" evidence="13">
    <location>
        <begin position="109"/>
        <end position="111"/>
    </location>
</feature>
<feature type="helix" evidence="13">
    <location>
        <begin position="122"/>
        <end position="124"/>
    </location>
</feature>
<feature type="helix" evidence="13">
    <location>
        <begin position="128"/>
        <end position="131"/>
    </location>
</feature>
<feature type="turn" evidence="13">
    <location>
        <begin position="132"/>
        <end position="135"/>
    </location>
</feature>
<feature type="strand" evidence="13">
    <location>
        <begin position="137"/>
        <end position="142"/>
    </location>
</feature>
<feature type="helix" evidence="13">
    <location>
        <begin position="144"/>
        <end position="146"/>
    </location>
</feature>
<feature type="helix" evidence="13">
    <location>
        <begin position="151"/>
        <end position="157"/>
    </location>
</feature>
<feature type="helix" evidence="13">
    <location>
        <begin position="160"/>
        <end position="162"/>
    </location>
</feature>
<feature type="strand" evidence="13">
    <location>
        <begin position="163"/>
        <end position="166"/>
    </location>
</feature>
<feature type="helix" evidence="13">
    <location>
        <begin position="168"/>
        <end position="172"/>
    </location>
</feature>
<feature type="helix" evidence="13">
    <location>
        <begin position="174"/>
        <end position="185"/>
    </location>
</feature>
<feature type="turn" evidence="13">
    <location>
        <begin position="186"/>
        <end position="188"/>
    </location>
</feature>
<feature type="strand" evidence="13">
    <location>
        <begin position="190"/>
        <end position="199"/>
    </location>
</feature>
<feature type="strand" evidence="13">
    <location>
        <begin position="202"/>
        <end position="204"/>
    </location>
</feature>
<feature type="strand" evidence="11">
    <location>
        <begin position="206"/>
        <end position="208"/>
    </location>
</feature>
<feature type="strand" evidence="13">
    <location>
        <begin position="210"/>
        <end position="217"/>
    </location>
</feature>
<feature type="turn" evidence="13">
    <location>
        <begin position="218"/>
        <end position="221"/>
    </location>
</feature>
<feature type="strand" evidence="12">
    <location>
        <begin position="222"/>
        <end position="224"/>
    </location>
</feature>
<feature type="strand" evidence="13">
    <location>
        <begin position="226"/>
        <end position="236"/>
    </location>
</feature>
<feature type="strand" evidence="13">
    <location>
        <begin position="244"/>
        <end position="254"/>
    </location>
</feature>
<feature type="strand" evidence="13">
    <location>
        <begin position="258"/>
        <end position="260"/>
    </location>
</feature>
<feature type="helix" evidence="13">
    <location>
        <begin position="262"/>
        <end position="265"/>
    </location>
</feature>
<feature type="helix" evidence="13">
    <location>
        <begin position="269"/>
        <end position="276"/>
    </location>
</feature>
<feature type="strand" evidence="11">
    <location>
        <begin position="282"/>
        <end position="284"/>
    </location>
</feature>
<feature type="strand" evidence="9">
    <location>
        <begin position="286"/>
        <end position="288"/>
    </location>
</feature>
<feature type="strand" evidence="13">
    <location>
        <begin position="290"/>
        <end position="292"/>
    </location>
</feature>
<feature type="helix" evidence="13">
    <location>
        <begin position="293"/>
        <end position="296"/>
    </location>
</feature>
<feature type="helix" evidence="13">
    <location>
        <begin position="304"/>
        <end position="318"/>
    </location>
</feature>
<feature type="helix" evidence="13">
    <location>
        <begin position="322"/>
        <end position="334"/>
    </location>
</feature>
<feature type="helix" evidence="13">
    <location>
        <begin position="341"/>
        <end position="355"/>
    </location>
</feature>
<organism>
    <name type="scientific">Homo sapiens</name>
    <name type="common">Human</name>
    <dbReference type="NCBI Taxonomy" id="9606"/>
    <lineage>
        <taxon>Eukaryota</taxon>
        <taxon>Metazoa</taxon>
        <taxon>Chordata</taxon>
        <taxon>Craniata</taxon>
        <taxon>Vertebrata</taxon>
        <taxon>Euteleostomi</taxon>
        <taxon>Mammalia</taxon>
        <taxon>Eutheria</taxon>
        <taxon>Euarchontoglires</taxon>
        <taxon>Primates</taxon>
        <taxon>Haplorrhini</taxon>
        <taxon>Catarrhini</taxon>
        <taxon>Hominidae</taxon>
        <taxon>Homo</taxon>
    </lineage>
</organism>
<reference key="1">
    <citation type="journal article" date="1999" name="DNA Res.">
        <title>Characterization of a 1200-kb genomic segment of chromosome 3p22-p21.3.</title>
        <authorList>
            <person name="Daigo Y."/>
            <person name="Isomura M."/>
            <person name="Nishiwaki T."/>
            <person name="Tamari M."/>
            <person name="Ishikawa S."/>
            <person name="Kai M."/>
            <person name="Takeuchi K."/>
            <person name="Yamane Y."/>
            <person name="Hayashi R."/>
            <person name="Minami M."/>
            <person name="Fujino M.A."/>
            <person name="Hojo Y."/>
            <person name="Uchiyama I."/>
            <person name="Takagi T."/>
            <person name="Nakamura Y."/>
        </authorList>
    </citation>
    <scope>NUCLEOTIDE SEQUENCE [MRNA] (ISOFORMS 1 AND 2)</scope>
    <scope>VARIANT VAL-277</scope>
</reference>
<reference key="2">
    <citation type="journal article" date="2004" name="Nat. Genet.">
        <title>Complete sequencing and characterization of 21,243 full-length human cDNAs.</title>
        <authorList>
            <person name="Ota T."/>
            <person name="Suzuki Y."/>
            <person name="Nishikawa T."/>
            <person name="Otsuki T."/>
            <person name="Sugiyama T."/>
            <person name="Irie R."/>
            <person name="Wakamatsu A."/>
            <person name="Hayashi K."/>
            <person name="Sato H."/>
            <person name="Nagai K."/>
            <person name="Kimura K."/>
            <person name="Makita H."/>
            <person name="Sekine M."/>
            <person name="Obayashi M."/>
            <person name="Nishi T."/>
            <person name="Shibahara T."/>
            <person name="Tanaka T."/>
            <person name="Ishii S."/>
            <person name="Yamamoto J."/>
            <person name="Saito K."/>
            <person name="Kawai Y."/>
            <person name="Isono Y."/>
            <person name="Nakamura Y."/>
            <person name="Nagahari K."/>
            <person name="Murakami K."/>
            <person name="Yasuda T."/>
            <person name="Iwayanagi T."/>
            <person name="Wagatsuma M."/>
            <person name="Shiratori A."/>
            <person name="Sudo H."/>
            <person name="Hosoiri T."/>
            <person name="Kaku Y."/>
            <person name="Kodaira H."/>
            <person name="Kondo H."/>
            <person name="Sugawara M."/>
            <person name="Takahashi M."/>
            <person name="Kanda K."/>
            <person name="Yokoi T."/>
            <person name="Furuya T."/>
            <person name="Kikkawa E."/>
            <person name="Omura Y."/>
            <person name="Abe K."/>
            <person name="Kamihara K."/>
            <person name="Katsuta N."/>
            <person name="Sato K."/>
            <person name="Tanikawa M."/>
            <person name="Yamazaki M."/>
            <person name="Ninomiya K."/>
            <person name="Ishibashi T."/>
            <person name="Yamashita H."/>
            <person name="Murakawa K."/>
            <person name="Fujimori K."/>
            <person name="Tanai H."/>
            <person name="Kimata M."/>
            <person name="Watanabe M."/>
            <person name="Hiraoka S."/>
            <person name="Chiba Y."/>
            <person name="Ishida S."/>
            <person name="Ono Y."/>
            <person name="Takiguchi S."/>
            <person name="Watanabe S."/>
            <person name="Yosida M."/>
            <person name="Hotuta T."/>
            <person name="Kusano J."/>
            <person name="Kanehori K."/>
            <person name="Takahashi-Fujii A."/>
            <person name="Hara H."/>
            <person name="Tanase T.-O."/>
            <person name="Nomura Y."/>
            <person name="Togiya S."/>
            <person name="Komai F."/>
            <person name="Hara R."/>
            <person name="Takeuchi K."/>
            <person name="Arita M."/>
            <person name="Imose N."/>
            <person name="Musashino K."/>
            <person name="Yuuki H."/>
            <person name="Oshima A."/>
            <person name="Sasaki N."/>
            <person name="Aotsuka S."/>
            <person name="Yoshikawa Y."/>
            <person name="Matsunawa H."/>
            <person name="Ichihara T."/>
            <person name="Shiohata N."/>
            <person name="Sano S."/>
            <person name="Moriya S."/>
            <person name="Momiyama H."/>
            <person name="Satoh N."/>
            <person name="Takami S."/>
            <person name="Terashima Y."/>
            <person name="Suzuki O."/>
            <person name="Nakagawa S."/>
            <person name="Senoh A."/>
            <person name="Mizoguchi H."/>
            <person name="Goto Y."/>
            <person name="Shimizu F."/>
            <person name="Wakebe H."/>
            <person name="Hishigaki H."/>
            <person name="Watanabe T."/>
            <person name="Sugiyama A."/>
            <person name="Takemoto M."/>
            <person name="Kawakami B."/>
            <person name="Yamazaki M."/>
            <person name="Watanabe K."/>
            <person name="Kumagai A."/>
            <person name="Itakura S."/>
            <person name="Fukuzumi Y."/>
            <person name="Fujimori Y."/>
            <person name="Komiyama M."/>
            <person name="Tashiro H."/>
            <person name="Tanigami A."/>
            <person name="Fujiwara T."/>
            <person name="Ono T."/>
            <person name="Yamada K."/>
            <person name="Fujii Y."/>
            <person name="Ozaki K."/>
            <person name="Hirao M."/>
            <person name="Ohmori Y."/>
            <person name="Kawabata A."/>
            <person name="Hikiji T."/>
            <person name="Kobatake N."/>
            <person name="Inagaki H."/>
            <person name="Ikema Y."/>
            <person name="Okamoto S."/>
            <person name="Okitani R."/>
            <person name="Kawakami T."/>
            <person name="Noguchi S."/>
            <person name="Itoh T."/>
            <person name="Shigeta K."/>
            <person name="Senba T."/>
            <person name="Matsumura K."/>
            <person name="Nakajima Y."/>
            <person name="Mizuno T."/>
            <person name="Morinaga M."/>
            <person name="Sasaki M."/>
            <person name="Togashi T."/>
            <person name="Oyama M."/>
            <person name="Hata H."/>
            <person name="Watanabe M."/>
            <person name="Komatsu T."/>
            <person name="Mizushima-Sugano J."/>
            <person name="Satoh T."/>
            <person name="Shirai Y."/>
            <person name="Takahashi Y."/>
            <person name="Nakagawa K."/>
            <person name="Okumura K."/>
            <person name="Nagase T."/>
            <person name="Nomura N."/>
            <person name="Kikuchi H."/>
            <person name="Masuho Y."/>
            <person name="Yamashita R."/>
            <person name="Nakai K."/>
            <person name="Yada T."/>
            <person name="Nakamura Y."/>
            <person name="Ohara O."/>
            <person name="Isogai T."/>
            <person name="Sugano S."/>
        </authorList>
    </citation>
    <scope>NUCLEOTIDE SEQUENCE [LARGE SCALE MRNA] (ISOFORM 3)</scope>
    <source>
        <tissue>Spleen</tissue>
        <tissue>Subthalamic nucleus</tissue>
    </source>
</reference>
<reference key="3">
    <citation type="submission" date="2005-07" db="EMBL/GenBank/DDBJ databases">
        <authorList>
            <person name="Mural R.J."/>
            <person name="Istrail S."/>
            <person name="Sutton G.G."/>
            <person name="Florea L."/>
            <person name="Halpern A.L."/>
            <person name="Mobarry C.M."/>
            <person name="Lippert R."/>
            <person name="Walenz B."/>
            <person name="Shatkay H."/>
            <person name="Dew I."/>
            <person name="Miller J.R."/>
            <person name="Flanigan M.J."/>
            <person name="Edwards N.J."/>
            <person name="Bolanos R."/>
            <person name="Fasulo D."/>
            <person name="Halldorsson B.V."/>
            <person name="Hannenhalli S."/>
            <person name="Turner R."/>
            <person name="Yooseph S."/>
            <person name="Lu F."/>
            <person name="Nusskern D.R."/>
            <person name="Shue B.C."/>
            <person name="Zheng X.H."/>
            <person name="Zhong F."/>
            <person name="Delcher A.L."/>
            <person name="Huson D.H."/>
            <person name="Kravitz S.A."/>
            <person name="Mouchard L."/>
            <person name="Reinert K."/>
            <person name="Remington K.A."/>
            <person name="Clark A.G."/>
            <person name="Waterman M.S."/>
            <person name="Eichler E.E."/>
            <person name="Adams M.D."/>
            <person name="Hunkapiller M.W."/>
            <person name="Myers E.W."/>
            <person name="Venter J.C."/>
        </authorList>
    </citation>
    <scope>NUCLEOTIDE SEQUENCE [LARGE SCALE GENOMIC DNA]</scope>
</reference>
<reference key="4">
    <citation type="journal article" date="2004" name="Genome Res.">
        <title>The status, quality, and expansion of the NIH full-length cDNA project: the Mammalian Gene Collection (MGC).</title>
        <authorList>
            <consortium name="The MGC Project Team"/>
        </authorList>
    </citation>
    <scope>NUCLEOTIDE SEQUENCE [LARGE SCALE MRNA] (ISOFORM 3)</scope>
</reference>
<reference key="5">
    <citation type="journal article" date="2008" name="Nucleic Acids Res.">
        <title>EXOG, a novel paralog of endonuclease G in higher eukaryotes.</title>
        <authorList>
            <person name="Cymerman I.A."/>
            <person name="Chung I."/>
            <person name="Beckmann B.M."/>
            <person name="Bujnicki J.M."/>
            <person name="Meiss G."/>
        </authorList>
    </citation>
    <scope>FUNCTION</scope>
    <scope>COFACTOR</scope>
    <scope>SUBUNIT</scope>
    <scope>SUBCELLULAR LOCATION</scope>
    <scope>MUTAGENESIS OF SER-137 AND HIS-140</scope>
    <scope>CHARACTERIZATION OF VARIANT VAL-277</scope>
</reference>
<reference key="6">
    <citation type="journal article" date="2011" name="Sci. Signal.">
        <title>System-wide temporal characterization of the proteome and phosphoproteome of human embryonic stem cell differentiation.</title>
        <authorList>
            <person name="Rigbolt K.T."/>
            <person name="Prokhorova T.A."/>
            <person name="Akimov V."/>
            <person name="Henningsen J."/>
            <person name="Johansen P.T."/>
            <person name="Kratchmarova I."/>
            <person name="Kassem M."/>
            <person name="Mann M."/>
            <person name="Olsen J.V."/>
            <person name="Blagoev B."/>
        </authorList>
    </citation>
    <scope>IDENTIFICATION BY MASS SPECTROMETRY [LARGE SCALE ANALYSIS]</scope>
</reference>
<dbReference type="EC" id="3.1.30.-"/>
<dbReference type="EMBL" id="AB020523">
    <property type="protein sequence ID" value="BAA76752.1"/>
    <property type="molecule type" value="mRNA"/>
</dbReference>
<dbReference type="EMBL" id="AB020735">
    <property type="protein sequence ID" value="BAA76753.1"/>
    <property type="molecule type" value="mRNA"/>
</dbReference>
<dbReference type="EMBL" id="AK289602">
    <property type="protein sequence ID" value="BAF82291.1"/>
    <property type="molecule type" value="mRNA"/>
</dbReference>
<dbReference type="EMBL" id="AK290107">
    <property type="protein sequence ID" value="BAF82796.1"/>
    <property type="molecule type" value="mRNA"/>
</dbReference>
<dbReference type="EMBL" id="AK301067">
    <property type="protein sequence ID" value="BAG62674.1"/>
    <property type="molecule type" value="mRNA"/>
</dbReference>
<dbReference type="EMBL" id="AK315814">
    <property type="protein sequence ID" value="BAF98705.1"/>
    <property type="molecule type" value="mRNA"/>
</dbReference>
<dbReference type="EMBL" id="CH471055">
    <property type="protein sequence ID" value="EAW64538.1"/>
    <property type="molecule type" value="Genomic_DNA"/>
</dbReference>
<dbReference type="EMBL" id="BC104212">
    <property type="protein sequence ID" value="AAI04213.1"/>
    <property type="molecule type" value="mRNA"/>
</dbReference>
<dbReference type="EMBL" id="BC104213">
    <property type="protein sequence ID" value="AAI04214.1"/>
    <property type="molecule type" value="mRNA"/>
</dbReference>
<dbReference type="CCDS" id="CCDS2680.1">
    <molecule id="Q9Y2C4-1"/>
</dbReference>
<dbReference type="CCDS" id="CCDS46795.1">
    <molecule id="Q9Y2C4-4"/>
</dbReference>
<dbReference type="RefSeq" id="NP_001138936.1">
    <molecule id="Q9Y2C4-4"/>
    <property type="nucleotide sequence ID" value="NM_001145464.2"/>
</dbReference>
<dbReference type="RefSeq" id="NP_001305883.1">
    <property type="nucleotide sequence ID" value="NM_001318954.1"/>
</dbReference>
<dbReference type="RefSeq" id="NP_001305884.1">
    <property type="nucleotide sequence ID" value="NM_001318955.1"/>
</dbReference>
<dbReference type="RefSeq" id="NP_001305885.1">
    <property type="nucleotide sequence ID" value="NM_001318956.1"/>
</dbReference>
<dbReference type="RefSeq" id="NP_001305886.1">
    <property type="nucleotide sequence ID" value="NM_001318957.1"/>
</dbReference>
<dbReference type="RefSeq" id="NP_001305887.1">
    <property type="nucleotide sequence ID" value="NM_001318958.1"/>
</dbReference>
<dbReference type="RefSeq" id="NP_001305888.1">
    <property type="nucleotide sequence ID" value="NM_001318959.1"/>
</dbReference>
<dbReference type="RefSeq" id="NP_005098.2">
    <molecule id="Q9Y2C4-1"/>
    <property type="nucleotide sequence ID" value="NM_005107.4"/>
</dbReference>
<dbReference type="RefSeq" id="XP_005265690.1">
    <property type="nucleotide sequence ID" value="XM_005265633.3"/>
</dbReference>
<dbReference type="RefSeq" id="XP_006713507.1">
    <property type="nucleotide sequence ID" value="XM_006713444.3"/>
</dbReference>
<dbReference type="RefSeq" id="XP_016863073.1">
    <property type="nucleotide sequence ID" value="XM_017007584.1"/>
</dbReference>
<dbReference type="RefSeq" id="XP_016863074.1">
    <property type="nucleotide sequence ID" value="XM_017007585.1"/>
</dbReference>
<dbReference type="RefSeq" id="XP_016863075.1">
    <property type="nucleotide sequence ID" value="XM_017007586.1"/>
</dbReference>
<dbReference type="RefSeq" id="XP_016863076.1">
    <property type="nucleotide sequence ID" value="XM_017007587.1"/>
</dbReference>
<dbReference type="RefSeq" id="XP_016863077.1">
    <property type="nucleotide sequence ID" value="XM_017007588.1"/>
</dbReference>
<dbReference type="RefSeq" id="XP_016863078.1">
    <property type="nucleotide sequence ID" value="XM_017007589.1"/>
</dbReference>
<dbReference type="RefSeq" id="XP_016863079.1">
    <property type="nucleotide sequence ID" value="XM_017007590.1"/>
</dbReference>
<dbReference type="RefSeq" id="XP_016863080.1">
    <property type="nucleotide sequence ID" value="XM_017007591.1"/>
</dbReference>
<dbReference type="RefSeq" id="XP_016863081.1">
    <property type="nucleotide sequence ID" value="XM_017007592.1"/>
</dbReference>
<dbReference type="RefSeq" id="XP_016863082.1">
    <property type="nucleotide sequence ID" value="XM_017007593.1"/>
</dbReference>
<dbReference type="RefSeq" id="XP_047305330.1">
    <molecule id="Q9Y2C4-3"/>
    <property type="nucleotide sequence ID" value="XM_047449374.1"/>
</dbReference>
<dbReference type="RefSeq" id="XP_047305331.1">
    <molecule id="Q9Y2C4-3"/>
    <property type="nucleotide sequence ID" value="XM_047449375.1"/>
</dbReference>
<dbReference type="RefSeq" id="XP_047305332.1">
    <molecule id="Q9Y2C4-3"/>
    <property type="nucleotide sequence ID" value="XM_047449376.1"/>
</dbReference>
<dbReference type="RefSeq" id="XP_047305333.1">
    <molecule id="Q9Y2C4-3"/>
    <property type="nucleotide sequence ID" value="XM_047449377.1"/>
</dbReference>
<dbReference type="RefSeq" id="XP_047305334.1">
    <molecule id="Q9Y2C4-3"/>
    <property type="nucleotide sequence ID" value="XM_047449378.1"/>
</dbReference>
<dbReference type="RefSeq" id="XP_047305335.1">
    <molecule id="Q9Y2C4-3"/>
    <property type="nucleotide sequence ID" value="XM_047449379.1"/>
</dbReference>
<dbReference type="RefSeq" id="XP_047305336.1">
    <molecule id="Q9Y2C4-3"/>
    <property type="nucleotide sequence ID" value="XM_047449380.1"/>
</dbReference>
<dbReference type="RefSeq" id="XP_054204631.1">
    <molecule id="Q9Y2C4-3"/>
    <property type="nucleotide sequence ID" value="XM_054348656.1"/>
</dbReference>
<dbReference type="RefSeq" id="XP_054204632.1">
    <molecule id="Q9Y2C4-3"/>
    <property type="nucleotide sequence ID" value="XM_054348657.1"/>
</dbReference>
<dbReference type="RefSeq" id="XP_054204633.1">
    <molecule id="Q9Y2C4-3"/>
    <property type="nucleotide sequence ID" value="XM_054348658.1"/>
</dbReference>
<dbReference type="RefSeq" id="XP_054204634.1">
    <molecule id="Q9Y2C4-3"/>
    <property type="nucleotide sequence ID" value="XM_054348659.1"/>
</dbReference>
<dbReference type="RefSeq" id="XP_054204635.1">
    <molecule id="Q9Y2C4-3"/>
    <property type="nucleotide sequence ID" value="XM_054348660.1"/>
</dbReference>
<dbReference type="RefSeq" id="XP_054204636.1">
    <molecule id="Q9Y2C4-3"/>
    <property type="nucleotide sequence ID" value="XM_054348661.1"/>
</dbReference>
<dbReference type="PDB" id="4A1N">
    <property type="method" value="X-ray"/>
    <property type="resolution" value="2.80 A"/>
    <property type="chains" value="A=42-368"/>
</dbReference>
<dbReference type="PDB" id="5T3V">
    <property type="method" value="X-ray"/>
    <property type="resolution" value="2.60 A"/>
    <property type="chains" value="A/B=59-368"/>
</dbReference>
<dbReference type="PDB" id="5T40">
    <property type="method" value="X-ray"/>
    <property type="resolution" value="1.81 A"/>
    <property type="chains" value="A/B=59-368"/>
</dbReference>
<dbReference type="PDB" id="5T4I">
    <property type="method" value="X-ray"/>
    <property type="resolution" value="2.39 A"/>
    <property type="chains" value="A/B=59-368"/>
</dbReference>
<dbReference type="PDB" id="5T5C">
    <property type="method" value="X-ray"/>
    <property type="resolution" value="1.85 A"/>
    <property type="chains" value="A/B=59-368"/>
</dbReference>
<dbReference type="PDB" id="5ZKI">
    <property type="method" value="X-ray"/>
    <property type="resolution" value="2.32 A"/>
    <property type="chains" value="A/B=42-368"/>
</dbReference>
<dbReference type="PDB" id="5ZKJ">
    <property type="method" value="X-ray"/>
    <property type="resolution" value="2.80 A"/>
    <property type="chains" value="A/B=42-368"/>
</dbReference>
<dbReference type="PDB" id="6IID">
    <property type="method" value="X-ray"/>
    <property type="resolution" value="2.99 A"/>
    <property type="chains" value="A/B/C/D=42-368"/>
</dbReference>
<dbReference type="PDB" id="7R6T">
    <property type="method" value="X-ray"/>
    <property type="resolution" value="2.90 A"/>
    <property type="chains" value="C/D/L=58-368"/>
</dbReference>
<dbReference type="PDB" id="7R6V">
    <property type="method" value="X-ray"/>
    <property type="resolution" value="2.16 A"/>
    <property type="chains" value="D/E/G/I=58-368"/>
</dbReference>
<dbReference type="PDB" id="9FXN">
    <property type="method" value="X-ray"/>
    <property type="resolution" value="1.62 A"/>
    <property type="chains" value="A/B=59-368"/>
</dbReference>
<dbReference type="PDBsum" id="4A1N"/>
<dbReference type="PDBsum" id="5T3V"/>
<dbReference type="PDBsum" id="5T40"/>
<dbReference type="PDBsum" id="5T4I"/>
<dbReference type="PDBsum" id="5T5C"/>
<dbReference type="PDBsum" id="5ZKI"/>
<dbReference type="PDBsum" id="5ZKJ"/>
<dbReference type="PDBsum" id="6IID"/>
<dbReference type="PDBsum" id="7R6T"/>
<dbReference type="PDBsum" id="7R6V"/>
<dbReference type="PDBsum" id="9FXN"/>
<dbReference type="SMR" id="Q9Y2C4"/>
<dbReference type="BioGRID" id="115267">
    <property type="interactions" value="56"/>
</dbReference>
<dbReference type="FunCoup" id="Q9Y2C4">
    <property type="interactions" value="1400"/>
</dbReference>
<dbReference type="IntAct" id="Q9Y2C4">
    <property type="interactions" value="41"/>
</dbReference>
<dbReference type="MINT" id="Q9Y2C4"/>
<dbReference type="STRING" id="9606.ENSP00000287675"/>
<dbReference type="iPTMnet" id="Q9Y2C4"/>
<dbReference type="PhosphoSitePlus" id="Q9Y2C4"/>
<dbReference type="SwissPalm" id="Q9Y2C4"/>
<dbReference type="BioMuta" id="EXOG"/>
<dbReference type="DMDM" id="193806336"/>
<dbReference type="jPOST" id="Q9Y2C4"/>
<dbReference type="MassIVE" id="Q9Y2C4"/>
<dbReference type="PaxDb" id="9606-ENSP00000287675"/>
<dbReference type="PeptideAtlas" id="Q9Y2C4"/>
<dbReference type="ProteomicsDB" id="85725">
    <molecule id="Q9Y2C4-1"/>
</dbReference>
<dbReference type="ProteomicsDB" id="85726">
    <molecule id="Q9Y2C4-2"/>
</dbReference>
<dbReference type="ProteomicsDB" id="85727">
    <molecule id="Q9Y2C4-3"/>
</dbReference>
<dbReference type="ProteomicsDB" id="85728">
    <molecule id="Q9Y2C4-4"/>
</dbReference>
<dbReference type="Pumba" id="Q9Y2C4"/>
<dbReference type="Antibodypedia" id="2527">
    <property type="antibodies" value="163 antibodies from 31 providers"/>
</dbReference>
<dbReference type="DNASU" id="9941"/>
<dbReference type="Ensembl" id="ENST00000287675.10">
    <molecule id="Q9Y2C4-1"/>
    <property type="protein sequence ID" value="ENSP00000287675.5"/>
    <property type="gene ID" value="ENSG00000157036.13"/>
</dbReference>
<dbReference type="Ensembl" id="ENST00000422077.6">
    <molecule id="Q9Y2C4-4"/>
    <property type="protein sequence ID" value="ENSP00000404305.2"/>
    <property type="gene ID" value="ENSG00000157036.13"/>
</dbReference>
<dbReference type="GeneID" id="9941"/>
<dbReference type="KEGG" id="hsa:9941"/>
<dbReference type="MANE-Select" id="ENST00000287675.10">
    <property type="protein sequence ID" value="ENSP00000287675.5"/>
    <property type="RefSeq nucleotide sequence ID" value="NM_005107.4"/>
    <property type="RefSeq protein sequence ID" value="NP_005098.2"/>
</dbReference>
<dbReference type="UCSC" id="uc003cih.3">
    <molecule id="Q9Y2C4-1"/>
    <property type="organism name" value="human"/>
</dbReference>
<dbReference type="AGR" id="HGNC:3347"/>
<dbReference type="CTD" id="9941"/>
<dbReference type="DisGeNET" id="9941"/>
<dbReference type="GeneCards" id="EXOG"/>
<dbReference type="HGNC" id="HGNC:3347">
    <property type="gene designation" value="EXOG"/>
</dbReference>
<dbReference type="HPA" id="ENSG00000157036">
    <property type="expression patterns" value="Low tissue specificity"/>
</dbReference>
<dbReference type="MIM" id="604051">
    <property type="type" value="gene"/>
</dbReference>
<dbReference type="neXtProt" id="NX_Q9Y2C4"/>
<dbReference type="OpenTargets" id="ENSG00000157036"/>
<dbReference type="PharmGKB" id="PA27784"/>
<dbReference type="VEuPathDB" id="HostDB:ENSG00000157036"/>
<dbReference type="eggNOG" id="KOG3721">
    <property type="taxonomic scope" value="Eukaryota"/>
</dbReference>
<dbReference type="GeneTree" id="ENSGT00940000160677"/>
<dbReference type="HOGENOM" id="CLU_055174_3_0_1"/>
<dbReference type="InParanoid" id="Q9Y2C4"/>
<dbReference type="OMA" id="TCKLMGF"/>
<dbReference type="OrthoDB" id="5418055at2759"/>
<dbReference type="PAN-GO" id="Q9Y2C4">
    <property type="GO annotations" value="6 GO annotations based on evolutionary models"/>
</dbReference>
<dbReference type="PhylomeDB" id="Q9Y2C4"/>
<dbReference type="TreeFam" id="TF105386"/>
<dbReference type="PathwayCommons" id="Q9Y2C4"/>
<dbReference type="Reactome" id="R-HSA-9913635">
    <property type="pathway name" value="Strand-asynchronous mitochondrial DNA replication"/>
</dbReference>
<dbReference type="SignaLink" id="Q9Y2C4"/>
<dbReference type="BioGRID-ORCS" id="9941">
    <property type="hits" value="18 hits in 1156 CRISPR screens"/>
</dbReference>
<dbReference type="ChiTaRS" id="EXOG">
    <property type="organism name" value="human"/>
</dbReference>
<dbReference type="EvolutionaryTrace" id="Q9Y2C4"/>
<dbReference type="GenomeRNAi" id="9941"/>
<dbReference type="Pharos" id="Q9Y2C4">
    <property type="development level" value="Tbio"/>
</dbReference>
<dbReference type="PRO" id="PR:Q9Y2C4"/>
<dbReference type="Proteomes" id="UP000005640">
    <property type="component" value="Chromosome 3"/>
</dbReference>
<dbReference type="RNAct" id="Q9Y2C4">
    <property type="molecule type" value="protein"/>
</dbReference>
<dbReference type="Bgee" id="ENSG00000157036">
    <property type="expression patterns" value="Expressed in buccal mucosa cell and 165 other cell types or tissues"/>
</dbReference>
<dbReference type="ExpressionAtlas" id="Q9Y2C4">
    <property type="expression patterns" value="baseline and differential"/>
</dbReference>
<dbReference type="GO" id="GO:0005743">
    <property type="term" value="C:mitochondrial inner membrane"/>
    <property type="evidence" value="ECO:0000314"/>
    <property type="project" value="HGNC"/>
</dbReference>
<dbReference type="GO" id="GO:0005759">
    <property type="term" value="C:mitochondrial matrix"/>
    <property type="evidence" value="ECO:0000304"/>
    <property type="project" value="Reactome"/>
</dbReference>
<dbReference type="GO" id="GO:0005739">
    <property type="term" value="C:mitochondrion"/>
    <property type="evidence" value="ECO:0000314"/>
    <property type="project" value="HPA"/>
</dbReference>
<dbReference type="GO" id="GO:0005634">
    <property type="term" value="C:nucleus"/>
    <property type="evidence" value="ECO:0000318"/>
    <property type="project" value="GO_Central"/>
</dbReference>
<dbReference type="GO" id="GO:0032991">
    <property type="term" value="C:protein-containing complex"/>
    <property type="evidence" value="ECO:0000314"/>
    <property type="project" value="MGI"/>
</dbReference>
<dbReference type="GO" id="GO:0008409">
    <property type="term" value="F:5'-3' exonuclease activity"/>
    <property type="evidence" value="ECO:0000314"/>
    <property type="project" value="HGNC"/>
</dbReference>
<dbReference type="GO" id="GO:0004519">
    <property type="term" value="F:endonuclease activity"/>
    <property type="evidence" value="ECO:0000314"/>
    <property type="project" value="HGNC"/>
</dbReference>
<dbReference type="GO" id="GO:0046872">
    <property type="term" value="F:metal ion binding"/>
    <property type="evidence" value="ECO:0007669"/>
    <property type="project" value="UniProtKB-KW"/>
</dbReference>
<dbReference type="GO" id="GO:0003676">
    <property type="term" value="F:nucleic acid binding"/>
    <property type="evidence" value="ECO:0007669"/>
    <property type="project" value="InterPro"/>
</dbReference>
<dbReference type="GO" id="GO:0004521">
    <property type="term" value="F:RNA endonuclease activity"/>
    <property type="evidence" value="ECO:0000318"/>
    <property type="project" value="GO_Central"/>
</dbReference>
<dbReference type="GO" id="GO:0000014">
    <property type="term" value="F:single-stranded DNA endodeoxyribonuclease activity"/>
    <property type="evidence" value="ECO:0000318"/>
    <property type="project" value="GO_Central"/>
</dbReference>
<dbReference type="GO" id="GO:0006309">
    <property type="term" value="P:apoptotic DNA fragmentation"/>
    <property type="evidence" value="ECO:0000318"/>
    <property type="project" value="GO_Central"/>
</dbReference>
<dbReference type="CDD" id="cd00091">
    <property type="entry name" value="NUC"/>
    <property type="match status" value="1"/>
</dbReference>
<dbReference type="FunFam" id="3.40.570.10:FF:000003">
    <property type="entry name" value="Nuclease EXOG, mitochondrial"/>
    <property type="match status" value="1"/>
</dbReference>
<dbReference type="Gene3D" id="6.10.250.1250">
    <property type="match status" value="1"/>
</dbReference>
<dbReference type="Gene3D" id="3.40.570.10">
    <property type="entry name" value="Extracellular Endonuclease, subunit A"/>
    <property type="match status" value="1"/>
</dbReference>
<dbReference type="InterPro" id="IPR044929">
    <property type="entry name" value="DNA/RNA_non-sp_Endonuclease_sf"/>
</dbReference>
<dbReference type="InterPro" id="IPR001604">
    <property type="entry name" value="Endo_G_ENPP1-like_dom"/>
</dbReference>
<dbReference type="InterPro" id="IPR020821">
    <property type="entry name" value="ENPP1-3/EXOG-like_nuc-like"/>
</dbReference>
<dbReference type="InterPro" id="IPR041003">
    <property type="entry name" value="Exog_C"/>
</dbReference>
<dbReference type="InterPro" id="IPR044925">
    <property type="entry name" value="His-Me_finger_sf"/>
</dbReference>
<dbReference type="InterPro" id="IPR040255">
    <property type="entry name" value="Non-specific_endonuclease"/>
</dbReference>
<dbReference type="PANTHER" id="PTHR13966">
    <property type="entry name" value="ENDONUCLEASE RELATED"/>
    <property type="match status" value="1"/>
</dbReference>
<dbReference type="PANTHER" id="PTHR13966:SF19">
    <property type="entry name" value="NUCLEASE EXOG, MITOCHONDRIAL"/>
    <property type="match status" value="1"/>
</dbReference>
<dbReference type="Pfam" id="PF01223">
    <property type="entry name" value="Endonuclease_NS"/>
    <property type="match status" value="1"/>
</dbReference>
<dbReference type="Pfam" id="PF18026">
    <property type="entry name" value="Exog_C"/>
    <property type="match status" value="1"/>
</dbReference>
<dbReference type="SMART" id="SM00892">
    <property type="entry name" value="Endonuclease_NS"/>
    <property type="match status" value="1"/>
</dbReference>
<dbReference type="SMART" id="SM00477">
    <property type="entry name" value="NUC"/>
    <property type="match status" value="1"/>
</dbReference>
<dbReference type="SUPFAM" id="SSF54060">
    <property type="entry name" value="His-Me finger endonucleases"/>
    <property type="match status" value="1"/>
</dbReference>
<keyword id="KW-0002">3D-structure</keyword>
<keyword id="KW-0025">Alternative splicing</keyword>
<keyword id="KW-0255">Endonuclease</keyword>
<keyword id="KW-0378">Hydrolase</keyword>
<keyword id="KW-0472">Membrane</keyword>
<keyword id="KW-0479">Metal-binding</keyword>
<keyword id="KW-0496">Mitochondrion</keyword>
<keyword id="KW-0999">Mitochondrion inner membrane</keyword>
<keyword id="KW-0540">Nuclease</keyword>
<keyword id="KW-1267">Proteomics identification</keyword>
<keyword id="KW-1185">Reference proteome</keyword>
<keyword id="KW-0809">Transit peptide</keyword>
<sequence length="368" mass="41085">MAIKSIASRLRGSRRFLSGFVAGAVVGAAGAGLAALQFFRSQGAEGALTGKQPDGSAEKAVLEQFGFPLTGTEARCYTNHALSYDQAKRVPRWVLEHISKSKIMGDADRKHCKFKPDPNIPPTFSAFNEDYVGSGWSRGHMAPAGNNKFSSKAMAETFYLSNIVPQDFDNNSGYWNRIEMYCRELTERFEDVWVVSGPLTLPQTRGDGKKIVSYQVIGEDNVAVPSHLYKVILARRSSVSTEPLALGAFVVPNEAIGFQPQLTEFQVSLQDLEKLSGLVFFPHLDRTSDIRNICSVDTCKLLDFQEFTLYLSTRKIEGARSVLRLEKIMENLKNAEIEPDDYFMSRYEKKLEELKAKEQSGTQIRKPS</sequence>
<proteinExistence type="evidence at protein level"/>
<protein>
    <recommendedName>
        <fullName>Nuclease EXOG, mitochondrial</fullName>
        <ecNumber>3.1.30.-</ecNumber>
    </recommendedName>
    <alternativeName>
        <fullName>Endonuclease G-like 1</fullName>
        <shortName>Endo G-like 1</shortName>
    </alternativeName>
</protein>
<accession>Q9Y2C4</accession>
<accession>A8K242</accession>
<accession>B4DVG2</accession>
<accession>Q3SXM9</accession>
<accession>Q9Y2C8</accession>